<protein>
    <recommendedName>
        <fullName evidence="1">Adenylosuccinate synthetase</fullName>
        <shortName evidence="1">AMPSase</shortName>
        <shortName evidence="1">AdSS</shortName>
        <ecNumber evidence="1">6.3.4.4</ecNumber>
    </recommendedName>
    <alternativeName>
        <fullName evidence="1">IMP--aspartate ligase</fullName>
    </alternativeName>
</protein>
<reference key="1">
    <citation type="submission" date="2005-08" db="EMBL/GenBank/DDBJ databases">
        <title>Complete sequence of chromosome 1 of Nitrosospira multiformis ATCC 25196.</title>
        <authorList>
            <person name="Copeland A."/>
            <person name="Lucas S."/>
            <person name="Lapidus A."/>
            <person name="Barry K."/>
            <person name="Detter J.C."/>
            <person name="Glavina T."/>
            <person name="Hammon N."/>
            <person name="Israni S."/>
            <person name="Pitluck S."/>
            <person name="Chain P."/>
            <person name="Malfatti S."/>
            <person name="Shin M."/>
            <person name="Vergez L."/>
            <person name="Schmutz J."/>
            <person name="Larimer F."/>
            <person name="Land M."/>
            <person name="Hauser L."/>
            <person name="Kyrpides N."/>
            <person name="Lykidis A."/>
            <person name="Richardson P."/>
        </authorList>
    </citation>
    <scope>NUCLEOTIDE SEQUENCE [LARGE SCALE GENOMIC DNA]</scope>
    <source>
        <strain>ATCC 25196 / NCIMB 11849 / C 71</strain>
    </source>
</reference>
<dbReference type="EC" id="6.3.4.4" evidence="1"/>
<dbReference type="EMBL" id="CP000103">
    <property type="protein sequence ID" value="ABB73749.1"/>
    <property type="molecule type" value="Genomic_DNA"/>
</dbReference>
<dbReference type="RefSeq" id="WP_011379803.1">
    <property type="nucleotide sequence ID" value="NC_007614.1"/>
</dbReference>
<dbReference type="SMR" id="Q2YBX2"/>
<dbReference type="STRING" id="323848.Nmul_A0441"/>
<dbReference type="KEGG" id="nmu:Nmul_A0441"/>
<dbReference type="eggNOG" id="COG0104">
    <property type="taxonomic scope" value="Bacteria"/>
</dbReference>
<dbReference type="HOGENOM" id="CLU_029848_0_0_4"/>
<dbReference type="OrthoDB" id="9807553at2"/>
<dbReference type="UniPathway" id="UPA00075">
    <property type="reaction ID" value="UER00335"/>
</dbReference>
<dbReference type="Proteomes" id="UP000002718">
    <property type="component" value="Chromosome"/>
</dbReference>
<dbReference type="GO" id="GO:0005737">
    <property type="term" value="C:cytoplasm"/>
    <property type="evidence" value="ECO:0007669"/>
    <property type="project" value="UniProtKB-SubCell"/>
</dbReference>
<dbReference type="GO" id="GO:0004019">
    <property type="term" value="F:adenylosuccinate synthase activity"/>
    <property type="evidence" value="ECO:0007669"/>
    <property type="project" value="UniProtKB-UniRule"/>
</dbReference>
<dbReference type="GO" id="GO:0005525">
    <property type="term" value="F:GTP binding"/>
    <property type="evidence" value="ECO:0007669"/>
    <property type="project" value="UniProtKB-UniRule"/>
</dbReference>
<dbReference type="GO" id="GO:0000287">
    <property type="term" value="F:magnesium ion binding"/>
    <property type="evidence" value="ECO:0007669"/>
    <property type="project" value="UniProtKB-UniRule"/>
</dbReference>
<dbReference type="GO" id="GO:0044208">
    <property type="term" value="P:'de novo' AMP biosynthetic process"/>
    <property type="evidence" value="ECO:0007669"/>
    <property type="project" value="UniProtKB-UniRule"/>
</dbReference>
<dbReference type="GO" id="GO:0046040">
    <property type="term" value="P:IMP metabolic process"/>
    <property type="evidence" value="ECO:0007669"/>
    <property type="project" value="TreeGrafter"/>
</dbReference>
<dbReference type="CDD" id="cd03108">
    <property type="entry name" value="AdSS"/>
    <property type="match status" value="1"/>
</dbReference>
<dbReference type="FunFam" id="1.10.300.10:FF:000001">
    <property type="entry name" value="Adenylosuccinate synthetase"/>
    <property type="match status" value="1"/>
</dbReference>
<dbReference type="FunFam" id="3.90.170.10:FF:000001">
    <property type="entry name" value="Adenylosuccinate synthetase"/>
    <property type="match status" value="1"/>
</dbReference>
<dbReference type="Gene3D" id="3.40.440.10">
    <property type="entry name" value="Adenylosuccinate Synthetase, subunit A, domain 1"/>
    <property type="match status" value="1"/>
</dbReference>
<dbReference type="Gene3D" id="1.10.300.10">
    <property type="entry name" value="Adenylosuccinate Synthetase, subunit A, domain 2"/>
    <property type="match status" value="1"/>
</dbReference>
<dbReference type="Gene3D" id="3.90.170.10">
    <property type="entry name" value="Adenylosuccinate Synthetase, subunit A, domain 3"/>
    <property type="match status" value="1"/>
</dbReference>
<dbReference type="HAMAP" id="MF_00011">
    <property type="entry name" value="Adenylosucc_synth"/>
    <property type="match status" value="1"/>
</dbReference>
<dbReference type="InterPro" id="IPR018220">
    <property type="entry name" value="Adenylosuccin_syn_GTP-bd"/>
</dbReference>
<dbReference type="InterPro" id="IPR033128">
    <property type="entry name" value="Adenylosuccin_syn_Lys_AS"/>
</dbReference>
<dbReference type="InterPro" id="IPR042109">
    <property type="entry name" value="Adenylosuccinate_synth_dom1"/>
</dbReference>
<dbReference type="InterPro" id="IPR042110">
    <property type="entry name" value="Adenylosuccinate_synth_dom2"/>
</dbReference>
<dbReference type="InterPro" id="IPR042111">
    <property type="entry name" value="Adenylosuccinate_synth_dom3"/>
</dbReference>
<dbReference type="InterPro" id="IPR001114">
    <property type="entry name" value="Adenylosuccinate_synthetase"/>
</dbReference>
<dbReference type="InterPro" id="IPR027417">
    <property type="entry name" value="P-loop_NTPase"/>
</dbReference>
<dbReference type="NCBIfam" id="NF002223">
    <property type="entry name" value="PRK01117.1"/>
    <property type="match status" value="1"/>
</dbReference>
<dbReference type="NCBIfam" id="TIGR00184">
    <property type="entry name" value="purA"/>
    <property type="match status" value="1"/>
</dbReference>
<dbReference type="PANTHER" id="PTHR11846">
    <property type="entry name" value="ADENYLOSUCCINATE SYNTHETASE"/>
    <property type="match status" value="1"/>
</dbReference>
<dbReference type="PANTHER" id="PTHR11846:SF0">
    <property type="entry name" value="ADENYLOSUCCINATE SYNTHETASE"/>
    <property type="match status" value="1"/>
</dbReference>
<dbReference type="Pfam" id="PF00709">
    <property type="entry name" value="Adenylsucc_synt"/>
    <property type="match status" value="1"/>
</dbReference>
<dbReference type="SMART" id="SM00788">
    <property type="entry name" value="Adenylsucc_synt"/>
    <property type="match status" value="1"/>
</dbReference>
<dbReference type="SUPFAM" id="SSF52540">
    <property type="entry name" value="P-loop containing nucleoside triphosphate hydrolases"/>
    <property type="match status" value="1"/>
</dbReference>
<dbReference type="PROSITE" id="PS01266">
    <property type="entry name" value="ADENYLOSUCCIN_SYN_1"/>
    <property type="match status" value="1"/>
</dbReference>
<dbReference type="PROSITE" id="PS00513">
    <property type="entry name" value="ADENYLOSUCCIN_SYN_2"/>
    <property type="match status" value="1"/>
</dbReference>
<gene>
    <name evidence="1" type="primary">purA</name>
    <name type="ordered locus">Nmul_A0441</name>
</gene>
<keyword id="KW-0963">Cytoplasm</keyword>
<keyword id="KW-0342">GTP-binding</keyword>
<keyword id="KW-0436">Ligase</keyword>
<keyword id="KW-0460">Magnesium</keyword>
<keyword id="KW-0479">Metal-binding</keyword>
<keyword id="KW-0547">Nucleotide-binding</keyword>
<keyword id="KW-0658">Purine biosynthesis</keyword>
<keyword id="KW-1185">Reference proteome</keyword>
<evidence type="ECO:0000255" key="1">
    <source>
        <dbReference type="HAMAP-Rule" id="MF_00011"/>
    </source>
</evidence>
<sequence>MSKNVVVIGTQWGDEGKGKIVDWLTDQAQGVVRFQGGHNAGHTLVIGGKQTVLHLIPSGILRKDVACYIGNGVVVSPQALLDEVGMLERAGIDVLSRLRISEACPLILPCHVALDNAREIARGLGKIGTTGRGIGPAYEDKVARRAVRLQDLFHRDRFAAKLGEILDYHNFVLKNYFQSPVVDFQQTMDETLSLVERIRPMVADVPRLLFEANRAGANLLFEGAQGALLDIDHGTYPFVTSSNCIAGAATTGSGIGPQMLHYVLGITKAYTTRVGAGPFPTELDDDVGRHLAKRGNEFGATTGRPRRCGWFDAAALKRSIQINGVSGLCVTKLDVMDGVETLRLGVGYKMMGKGEEEKFSAIMPVGAEELASCEPVYEEMPGWSGSTVGIRNFEQLPMAARNYLKRMEEVCEVSIDMISTGPDREETIVLRHPFE</sequence>
<organism>
    <name type="scientific">Nitrosospira multiformis (strain ATCC 25196 / NCIMB 11849 / C 71)</name>
    <dbReference type="NCBI Taxonomy" id="323848"/>
    <lineage>
        <taxon>Bacteria</taxon>
        <taxon>Pseudomonadati</taxon>
        <taxon>Pseudomonadota</taxon>
        <taxon>Betaproteobacteria</taxon>
        <taxon>Nitrosomonadales</taxon>
        <taxon>Nitrosomonadaceae</taxon>
        <taxon>Nitrosospira</taxon>
    </lineage>
</organism>
<feature type="chain" id="PRO_1000070942" description="Adenylosuccinate synthetase">
    <location>
        <begin position="1"/>
        <end position="435"/>
    </location>
</feature>
<feature type="active site" description="Proton acceptor" evidence="1">
    <location>
        <position position="14"/>
    </location>
</feature>
<feature type="active site" description="Proton donor" evidence="1">
    <location>
        <position position="42"/>
    </location>
</feature>
<feature type="binding site" evidence="1">
    <location>
        <begin position="13"/>
        <end position="19"/>
    </location>
    <ligand>
        <name>GTP</name>
        <dbReference type="ChEBI" id="CHEBI:37565"/>
    </ligand>
</feature>
<feature type="binding site" description="in other chain" evidence="1">
    <location>
        <begin position="14"/>
        <end position="17"/>
    </location>
    <ligand>
        <name>IMP</name>
        <dbReference type="ChEBI" id="CHEBI:58053"/>
        <note>ligand shared between dimeric partners</note>
    </ligand>
</feature>
<feature type="binding site" evidence="1">
    <location>
        <position position="14"/>
    </location>
    <ligand>
        <name>Mg(2+)</name>
        <dbReference type="ChEBI" id="CHEBI:18420"/>
    </ligand>
</feature>
<feature type="binding site" description="in other chain" evidence="1">
    <location>
        <begin position="39"/>
        <end position="42"/>
    </location>
    <ligand>
        <name>IMP</name>
        <dbReference type="ChEBI" id="CHEBI:58053"/>
        <note>ligand shared between dimeric partners</note>
    </ligand>
</feature>
<feature type="binding site" evidence="1">
    <location>
        <begin position="41"/>
        <end position="43"/>
    </location>
    <ligand>
        <name>GTP</name>
        <dbReference type="ChEBI" id="CHEBI:37565"/>
    </ligand>
</feature>
<feature type="binding site" evidence="1">
    <location>
        <position position="41"/>
    </location>
    <ligand>
        <name>Mg(2+)</name>
        <dbReference type="ChEBI" id="CHEBI:18420"/>
    </ligand>
</feature>
<feature type="binding site" description="in other chain" evidence="1">
    <location>
        <position position="130"/>
    </location>
    <ligand>
        <name>IMP</name>
        <dbReference type="ChEBI" id="CHEBI:58053"/>
        <note>ligand shared between dimeric partners</note>
    </ligand>
</feature>
<feature type="binding site" evidence="1">
    <location>
        <position position="144"/>
    </location>
    <ligand>
        <name>IMP</name>
        <dbReference type="ChEBI" id="CHEBI:58053"/>
        <note>ligand shared between dimeric partners</note>
    </ligand>
</feature>
<feature type="binding site" description="in other chain" evidence="1">
    <location>
        <position position="225"/>
    </location>
    <ligand>
        <name>IMP</name>
        <dbReference type="ChEBI" id="CHEBI:58053"/>
        <note>ligand shared between dimeric partners</note>
    </ligand>
</feature>
<feature type="binding site" description="in other chain" evidence="1">
    <location>
        <position position="240"/>
    </location>
    <ligand>
        <name>IMP</name>
        <dbReference type="ChEBI" id="CHEBI:58053"/>
        <note>ligand shared between dimeric partners</note>
    </ligand>
</feature>
<feature type="binding site" evidence="1">
    <location>
        <begin position="300"/>
        <end position="306"/>
    </location>
    <ligand>
        <name>substrate</name>
    </ligand>
</feature>
<feature type="binding site" description="in other chain" evidence="1">
    <location>
        <position position="304"/>
    </location>
    <ligand>
        <name>IMP</name>
        <dbReference type="ChEBI" id="CHEBI:58053"/>
        <note>ligand shared between dimeric partners</note>
    </ligand>
</feature>
<feature type="binding site" evidence="1">
    <location>
        <position position="306"/>
    </location>
    <ligand>
        <name>GTP</name>
        <dbReference type="ChEBI" id="CHEBI:37565"/>
    </ligand>
</feature>
<feature type="binding site" evidence="1">
    <location>
        <begin position="332"/>
        <end position="334"/>
    </location>
    <ligand>
        <name>GTP</name>
        <dbReference type="ChEBI" id="CHEBI:37565"/>
    </ligand>
</feature>
<feature type="binding site" evidence="1">
    <location>
        <begin position="419"/>
        <end position="421"/>
    </location>
    <ligand>
        <name>GTP</name>
        <dbReference type="ChEBI" id="CHEBI:37565"/>
    </ligand>
</feature>
<proteinExistence type="inferred from homology"/>
<comment type="function">
    <text evidence="1">Plays an important role in the de novo pathway of purine nucleotide biosynthesis. Catalyzes the first committed step in the biosynthesis of AMP from IMP.</text>
</comment>
<comment type="catalytic activity">
    <reaction evidence="1">
        <text>IMP + L-aspartate + GTP = N(6)-(1,2-dicarboxyethyl)-AMP + GDP + phosphate + 2 H(+)</text>
        <dbReference type="Rhea" id="RHEA:15753"/>
        <dbReference type="ChEBI" id="CHEBI:15378"/>
        <dbReference type="ChEBI" id="CHEBI:29991"/>
        <dbReference type="ChEBI" id="CHEBI:37565"/>
        <dbReference type="ChEBI" id="CHEBI:43474"/>
        <dbReference type="ChEBI" id="CHEBI:57567"/>
        <dbReference type="ChEBI" id="CHEBI:58053"/>
        <dbReference type="ChEBI" id="CHEBI:58189"/>
        <dbReference type="EC" id="6.3.4.4"/>
    </reaction>
</comment>
<comment type="cofactor">
    <cofactor evidence="1">
        <name>Mg(2+)</name>
        <dbReference type="ChEBI" id="CHEBI:18420"/>
    </cofactor>
    <text evidence="1">Binds 1 Mg(2+) ion per subunit.</text>
</comment>
<comment type="pathway">
    <text evidence="1">Purine metabolism; AMP biosynthesis via de novo pathway; AMP from IMP: step 1/2.</text>
</comment>
<comment type="subunit">
    <text evidence="1">Homodimer.</text>
</comment>
<comment type="subcellular location">
    <subcellularLocation>
        <location evidence="1">Cytoplasm</location>
    </subcellularLocation>
</comment>
<comment type="similarity">
    <text evidence="1">Belongs to the adenylosuccinate synthetase family.</text>
</comment>
<accession>Q2YBX2</accession>
<name>PURA_NITMU</name>